<gene>
    <name evidence="1" type="primary">ctaA</name>
    <name type="ordered locus">CC_1374</name>
</gene>
<reference key="1">
    <citation type="journal article" date="2001" name="Proc. Natl. Acad. Sci. U.S.A.">
        <title>Complete genome sequence of Caulobacter crescentus.</title>
        <authorList>
            <person name="Nierman W.C."/>
            <person name="Feldblyum T.V."/>
            <person name="Laub M.T."/>
            <person name="Paulsen I.T."/>
            <person name="Nelson K.E."/>
            <person name="Eisen J.A."/>
            <person name="Heidelberg J.F."/>
            <person name="Alley M.R.K."/>
            <person name="Ohta N."/>
            <person name="Maddock J.R."/>
            <person name="Potocka I."/>
            <person name="Nelson W.C."/>
            <person name="Newton A."/>
            <person name="Stephens C."/>
            <person name="Phadke N.D."/>
            <person name="Ely B."/>
            <person name="DeBoy R.T."/>
            <person name="Dodson R.J."/>
            <person name="Durkin A.S."/>
            <person name="Gwinn M.L."/>
            <person name="Haft D.H."/>
            <person name="Kolonay J.F."/>
            <person name="Smit J."/>
            <person name="Craven M.B."/>
            <person name="Khouri H.M."/>
            <person name="Shetty J."/>
            <person name="Berry K.J."/>
            <person name="Utterback T.R."/>
            <person name="Tran K."/>
            <person name="Wolf A.M."/>
            <person name="Vamathevan J.J."/>
            <person name="Ermolaeva M.D."/>
            <person name="White O."/>
            <person name="Salzberg S.L."/>
            <person name="Venter J.C."/>
            <person name="Shapiro L."/>
            <person name="Fraser C.M."/>
        </authorList>
    </citation>
    <scope>NUCLEOTIDE SEQUENCE [LARGE SCALE GENOMIC DNA]</scope>
    <source>
        <strain>ATCC 19089 / CIP 103742 / CB 15</strain>
    </source>
</reference>
<evidence type="ECO:0000255" key="1">
    <source>
        <dbReference type="HAMAP-Rule" id="MF_01665"/>
    </source>
</evidence>
<name>CTAA_CAUVC</name>
<keyword id="KW-1003">Cell membrane</keyword>
<keyword id="KW-0350">Heme biosynthesis</keyword>
<keyword id="KW-0408">Iron</keyword>
<keyword id="KW-0472">Membrane</keyword>
<keyword id="KW-0479">Metal-binding</keyword>
<keyword id="KW-0560">Oxidoreductase</keyword>
<keyword id="KW-1185">Reference proteome</keyword>
<keyword id="KW-0812">Transmembrane</keyword>
<keyword id="KW-1133">Transmembrane helix</keyword>
<organism>
    <name type="scientific">Caulobacter vibrioides (strain ATCC 19089 / CIP 103742 / CB 15)</name>
    <name type="common">Caulobacter crescentus</name>
    <dbReference type="NCBI Taxonomy" id="190650"/>
    <lineage>
        <taxon>Bacteria</taxon>
        <taxon>Pseudomonadati</taxon>
        <taxon>Pseudomonadota</taxon>
        <taxon>Alphaproteobacteria</taxon>
        <taxon>Caulobacterales</taxon>
        <taxon>Caulobacteraceae</taxon>
        <taxon>Caulobacter</taxon>
    </lineage>
</organism>
<feature type="chain" id="PRO_0000349027" description="Heme A synthase">
    <location>
        <begin position="1"/>
        <end position="343"/>
    </location>
</feature>
<feature type="transmembrane region" description="Helical" evidence="1">
    <location>
        <begin position="13"/>
        <end position="33"/>
    </location>
</feature>
<feature type="transmembrane region" description="Helical" evidence="1">
    <location>
        <begin position="96"/>
        <end position="116"/>
    </location>
</feature>
<feature type="transmembrane region" description="Helical" evidence="1">
    <location>
        <begin position="130"/>
        <end position="150"/>
    </location>
</feature>
<feature type="transmembrane region" description="Helical" evidence="1">
    <location>
        <begin position="161"/>
        <end position="181"/>
    </location>
</feature>
<feature type="transmembrane region" description="Helical" evidence="1">
    <location>
        <begin position="197"/>
        <end position="217"/>
    </location>
</feature>
<feature type="transmembrane region" description="Helical" evidence="1">
    <location>
        <begin position="258"/>
        <end position="278"/>
    </location>
</feature>
<feature type="transmembrane region" description="Helical" evidence="1">
    <location>
        <begin position="294"/>
        <end position="314"/>
    </location>
</feature>
<feature type="transmembrane region" description="Helical" evidence="1">
    <location>
        <begin position="318"/>
        <end position="338"/>
    </location>
</feature>
<feature type="binding site" description="axial binding residue" evidence="1">
    <location>
        <position position="260"/>
    </location>
    <ligand>
        <name>heme</name>
        <dbReference type="ChEBI" id="CHEBI:30413"/>
    </ligand>
    <ligandPart>
        <name>Fe</name>
        <dbReference type="ChEBI" id="CHEBI:18248"/>
    </ligandPart>
</feature>
<feature type="binding site" description="axial binding residue" evidence="1">
    <location>
        <position position="322"/>
    </location>
    <ligand>
        <name>heme</name>
        <dbReference type="ChEBI" id="CHEBI:30413"/>
    </ligand>
    <ligandPart>
        <name>Fe</name>
        <dbReference type="ChEBI" id="CHEBI:18248"/>
    </ligandPart>
</feature>
<accession>Q9A8H9</accession>
<proteinExistence type="inferred from homology"/>
<comment type="function">
    <text evidence="1">Catalyzes the conversion of heme O to heme A by two successive hydroxylations of the methyl group at C8. The first hydroxylation forms heme I, the second hydroxylation results in an unstable dihydroxymethyl group, which spontaneously dehydrates, resulting in the formyl group of heme A.</text>
</comment>
<comment type="catalytic activity">
    <reaction evidence="1">
        <text>Fe(II)-heme o + 2 A + H2O = Fe(II)-heme a + 2 AH2</text>
        <dbReference type="Rhea" id="RHEA:63388"/>
        <dbReference type="ChEBI" id="CHEBI:13193"/>
        <dbReference type="ChEBI" id="CHEBI:15377"/>
        <dbReference type="ChEBI" id="CHEBI:17499"/>
        <dbReference type="ChEBI" id="CHEBI:60530"/>
        <dbReference type="ChEBI" id="CHEBI:61715"/>
        <dbReference type="EC" id="1.17.99.9"/>
    </reaction>
    <physiologicalReaction direction="left-to-right" evidence="1">
        <dbReference type="Rhea" id="RHEA:63389"/>
    </physiologicalReaction>
</comment>
<comment type="cofactor">
    <cofactor evidence="1">
        <name>heme b</name>
        <dbReference type="ChEBI" id="CHEBI:60344"/>
    </cofactor>
</comment>
<comment type="pathway">
    <text evidence="1">Porphyrin-containing compound metabolism; heme A biosynthesis; heme A from heme O: step 1/1.</text>
</comment>
<comment type="subunit">
    <text evidence="1">Interacts with CtaB.</text>
</comment>
<comment type="subcellular location">
    <subcellularLocation>
        <location evidence="1">Cell membrane</location>
        <topology evidence="1">Multi-pass membrane protein</topology>
    </subcellularLocation>
</comment>
<comment type="similarity">
    <text evidence="1">Belongs to the COX15/CtaA family. Type 2 subfamily.</text>
</comment>
<dbReference type="EC" id="1.17.99.9" evidence="1"/>
<dbReference type="EMBL" id="AE005673">
    <property type="protein sequence ID" value="AAK23355.1"/>
    <property type="molecule type" value="Genomic_DNA"/>
</dbReference>
<dbReference type="PIR" id="G87419">
    <property type="entry name" value="G87419"/>
</dbReference>
<dbReference type="RefSeq" id="NP_420187.1">
    <property type="nucleotide sequence ID" value="NC_002696.2"/>
</dbReference>
<dbReference type="RefSeq" id="WP_010919251.1">
    <property type="nucleotide sequence ID" value="NC_002696.2"/>
</dbReference>
<dbReference type="SMR" id="Q9A8H9"/>
<dbReference type="STRING" id="190650.CC_1374"/>
<dbReference type="EnsemblBacteria" id="AAK23355">
    <property type="protein sequence ID" value="AAK23355"/>
    <property type="gene ID" value="CC_1374"/>
</dbReference>
<dbReference type="KEGG" id="ccr:CC_1374"/>
<dbReference type="PATRIC" id="fig|190650.5.peg.1404"/>
<dbReference type="eggNOG" id="COG1612">
    <property type="taxonomic scope" value="Bacteria"/>
</dbReference>
<dbReference type="HOGENOM" id="CLU_017627_0_0_5"/>
<dbReference type="BioCyc" id="CAULO:CC1374-MONOMER"/>
<dbReference type="UniPathway" id="UPA00269">
    <property type="reaction ID" value="UER00713"/>
</dbReference>
<dbReference type="Proteomes" id="UP000001816">
    <property type="component" value="Chromosome"/>
</dbReference>
<dbReference type="GO" id="GO:0005886">
    <property type="term" value="C:plasma membrane"/>
    <property type="evidence" value="ECO:0007669"/>
    <property type="project" value="UniProtKB-SubCell"/>
</dbReference>
<dbReference type="GO" id="GO:0046872">
    <property type="term" value="F:metal ion binding"/>
    <property type="evidence" value="ECO:0007669"/>
    <property type="project" value="UniProtKB-KW"/>
</dbReference>
<dbReference type="GO" id="GO:0016653">
    <property type="term" value="F:oxidoreductase activity, acting on NAD(P)H, heme protein as acceptor"/>
    <property type="evidence" value="ECO:0007669"/>
    <property type="project" value="InterPro"/>
</dbReference>
<dbReference type="GO" id="GO:0006784">
    <property type="term" value="P:heme A biosynthetic process"/>
    <property type="evidence" value="ECO:0007669"/>
    <property type="project" value="UniProtKB-UniRule"/>
</dbReference>
<dbReference type="HAMAP" id="MF_01665">
    <property type="entry name" value="HemeA_synth_type2"/>
    <property type="match status" value="1"/>
</dbReference>
<dbReference type="InterPro" id="IPR003780">
    <property type="entry name" value="COX15/CtaA_fam"/>
</dbReference>
<dbReference type="InterPro" id="IPR023754">
    <property type="entry name" value="HemeA_Synthase_type2"/>
</dbReference>
<dbReference type="PANTHER" id="PTHR23289">
    <property type="entry name" value="CYTOCHROME C OXIDASE ASSEMBLY PROTEIN COX15"/>
    <property type="match status" value="1"/>
</dbReference>
<dbReference type="PANTHER" id="PTHR23289:SF2">
    <property type="entry name" value="CYTOCHROME C OXIDASE ASSEMBLY PROTEIN COX15 HOMOLOG"/>
    <property type="match status" value="1"/>
</dbReference>
<dbReference type="Pfam" id="PF02628">
    <property type="entry name" value="COX15-CtaA"/>
    <property type="match status" value="1"/>
</dbReference>
<protein>
    <recommendedName>
        <fullName evidence="1">Heme A synthase</fullName>
        <shortName evidence="1">HAS</shortName>
        <ecNumber evidence="1">1.17.99.9</ecNumber>
    </recommendedName>
    <alternativeName>
        <fullName evidence="1">Cytochrome aa3-controlling protein</fullName>
    </alternativeName>
</protein>
<sequence>MTSFLRSDRSRPVAIWLFIVAAMVFAMVVVGGATRLTDSGLSITEWQPIMGALPPMSEQAWRESFELYKQIPQFQLVNPDMTLEGYKEIFWWEWAHRLLGRTVGAVYAIPLIVFLIRRDIPRRLIWRCAAMLGLGGLQGLVGWWMVSSGLSERVSVAPERLMTHLGLALALFVLLIWTALDAWNGSPRVEERSPWRGWALAFLGAVFFQSLLGALVAGNDAGFVYNDWPLMNGRFFPGDYGGAGLWGTLAHSQAAVQFNHRIFAYALLLAAVVLVVLARRDRLLVGQGKSLATAVAAVVFLQAALGVWTLMAAVPISLGVLHQAGAAVLLAVATAFAWRVRRP</sequence>